<reference key="1">
    <citation type="journal article" date="2000" name="Science">
        <title>The genome sequence of Drosophila melanogaster.</title>
        <authorList>
            <person name="Adams M.D."/>
            <person name="Celniker S.E."/>
            <person name="Holt R.A."/>
            <person name="Evans C.A."/>
            <person name="Gocayne J.D."/>
            <person name="Amanatides P.G."/>
            <person name="Scherer S.E."/>
            <person name="Li P.W."/>
            <person name="Hoskins R.A."/>
            <person name="Galle R.F."/>
            <person name="George R.A."/>
            <person name="Lewis S.E."/>
            <person name="Richards S."/>
            <person name="Ashburner M."/>
            <person name="Henderson S.N."/>
            <person name="Sutton G.G."/>
            <person name="Wortman J.R."/>
            <person name="Yandell M.D."/>
            <person name="Zhang Q."/>
            <person name="Chen L.X."/>
            <person name="Brandon R.C."/>
            <person name="Rogers Y.-H.C."/>
            <person name="Blazej R.G."/>
            <person name="Champe M."/>
            <person name="Pfeiffer B.D."/>
            <person name="Wan K.H."/>
            <person name="Doyle C."/>
            <person name="Baxter E.G."/>
            <person name="Helt G."/>
            <person name="Nelson C.R."/>
            <person name="Miklos G.L.G."/>
            <person name="Abril J.F."/>
            <person name="Agbayani A."/>
            <person name="An H.-J."/>
            <person name="Andrews-Pfannkoch C."/>
            <person name="Baldwin D."/>
            <person name="Ballew R.M."/>
            <person name="Basu A."/>
            <person name="Baxendale J."/>
            <person name="Bayraktaroglu L."/>
            <person name="Beasley E.M."/>
            <person name="Beeson K.Y."/>
            <person name="Benos P.V."/>
            <person name="Berman B.P."/>
            <person name="Bhandari D."/>
            <person name="Bolshakov S."/>
            <person name="Borkova D."/>
            <person name="Botchan M.R."/>
            <person name="Bouck J."/>
            <person name="Brokstein P."/>
            <person name="Brottier P."/>
            <person name="Burtis K.C."/>
            <person name="Busam D.A."/>
            <person name="Butler H."/>
            <person name="Cadieu E."/>
            <person name="Center A."/>
            <person name="Chandra I."/>
            <person name="Cherry J.M."/>
            <person name="Cawley S."/>
            <person name="Dahlke C."/>
            <person name="Davenport L.B."/>
            <person name="Davies P."/>
            <person name="de Pablos B."/>
            <person name="Delcher A."/>
            <person name="Deng Z."/>
            <person name="Mays A.D."/>
            <person name="Dew I."/>
            <person name="Dietz S.M."/>
            <person name="Dodson K."/>
            <person name="Doup L.E."/>
            <person name="Downes M."/>
            <person name="Dugan-Rocha S."/>
            <person name="Dunkov B.C."/>
            <person name="Dunn P."/>
            <person name="Durbin K.J."/>
            <person name="Evangelista C.C."/>
            <person name="Ferraz C."/>
            <person name="Ferriera S."/>
            <person name="Fleischmann W."/>
            <person name="Fosler C."/>
            <person name="Gabrielian A.E."/>
            <person name="Garg N.S."/>
            <person name="Gelbart W.M."/>
            <person name="Glasser K."/>
            <person name="Glodek A."/>
            <person name="Gong F."/>
            <person name="Gorrell J.H."/>
            <person name="Gu Z."/>
            <person name="Guan P."/>
            <person name="Harris M."/>
            <person name="Harris N.L."/>
            <person name="Harvey D.A."/>
            <person name="Heiman T.J."/>
            <person name="Hernandez J.R."/>
            <person name="Houck J."/>
            <person name="Hostin D."/>
            <person name="Houston K.A."/>
            <person name="Howland T.J."/>
            <person name="Wei M.-H."/>
            <person name="Ibegwam C."/>
            <person name="Jalali M."/>
            <person name="Kalush F."/>
            <person name="Karpen G.H."/>
            <person name="Ke Z."/>
            <person name="Kennison J.A."/>
            <person name="Ketchum K.A."/>
            <person name="Kimmel B.E."/>
            <person name="Kodira C.D."/>
            <person name="Kraft C.L."/>
            <person name="Kravitz S."/>
            <person name="Kulp D."/>
            <person name="Lai Z."/>
            <person name="Lasko P."/>
            <person name="Lei Y."/>
            <person name="Levitsky A.A."/>
            <person name="Li J.H."/>
            <person name="Li Z."/>
            <person name="Liang Y."/>
            <person name="Lin X."/>
            <person name="Liu X."/>
            <person name="Mattei B."/>
            <person name="McIntosh T.C."/>
            <person name="McLeod M.P."/>
            <person name="McPherson D."/>
            <person name="Merkulov G."/>
            <person name="Milshina N.V."/>
            <person name="Mobarry C."/>
            <person name="Morris J."/>
            <person name="Moshrefi A."/>
            <person name="Mount S.M."/>
            <person name="Moy M."/>
            <person name="Murphy B."/>
            <person name="Murphy L."/>
            <person name="Muzny D.M."/>
            <person name="Nelson D.L."/>
            <person name="Nelson D.R."/>
            <person name="Nelson K.A."/>
            <person name="Nixon K."/>
            <person name="Nusskern D.R."/>
            <person name="Pacleb J.M."/>
            <person name="Palazzolo M."/>
            <person name="Pittman G.S."/>
            <person name="Pan S."/>
            <person name="Pollard J."/>
            <person name="Puri V."/>
            <person name="Reese M.G."/>
            <person name="Reinert K."/>
            <person name="Remington K."/>
            <person name="Saunders R.D.C."/>
            <person name="Scheeler F."/>
            <person name="Shen H."/>
            <person name="Shue B.C."/>
            <person name="Siden-Kiamos I."/>
            <person name="Simpson M."/>
            <person name="Skupski M.P."/>
            <person name="Smith T.J."/>
            <person name="Spier E."/>
            <person name="Spradling A.C."/>
            <person name="Stapleton M."/>
            <person name="Strong R."/>
            <person name="Sun E."/>
            <person name="Svirskas R."/>
            <person name="Tector C."/>
            <person name="Turner R."/>
            <person name="Venter E."/>
            <person name="Wang A.H."/>
            <person name="Wang X."/>
            <person name="Wang Z.-Y."/>
            <person name="Wassarman D.A."/>
            <person name="Weinstock G.M."/>
            <person name="Weissenbach J."/>
            <person name="Williams S.M."/>
            <person name="Woodage T."/>
            <person name="Worley K.C."/>
            <person name="Wu D."/>
            <person name="Yang S."/>
            <person name="Yao Q.A."/>
            <person name="Ye J."/>
            <person name="Yeh R.-F."/>
            <person name="Zaveri J.S."/>
            <person name="Zhan M."/>
            <person name="Zhang G."/>
            <person name="Zhao Q."/>
            <person name="Zheng L."/>
            <person name="Zheng X.H."/>
            <person name="Zhong F.N."/>
            <person name="Zhong W."/>
            <person name="Zhou X."/>
            <person name="Zhu S.C."/>
            <person name="Zhu X."/>
            <person name="Smith H.O."/>
            <person name="Gibbs R.A."/>
            <person name="Myers E.W."/>
            <person name="Rubin G.M."/>
            <person name="Venter J.C."/>
        </authorList>
    </citation>
    <scope>NUCLEOTIDE SEQUENCE [LARGE SCALE GENOMIC DNA]</scope>
    <source>
        <strain>Berkeley</strain>
    </source>
</reference>
<reference key="2">
    <citation type="journal article" date="2002" name="Genome Biol.">
        <title>Annotation of the Drosophila melanogaster euchromatic genome: a systematic review.</title>
        <authorList>
            <person name="Misra S."/>
            <person name="Crosby M.A."/>
            <person name="Mungall C.J."/>
            <person name="Matthews B.B."/>
            <person name="Campbell K.S."/>
            <person name="Hradecky P."/>
            <person name="Huang Y."/>
            <person name="Kaminker J.S."/>
            <person name="Millburn G.H."/>
            <person name="Prochnik S.E."/>
            <person name="Smith C.D."/>
            <person name="Tupy J.L."/>
            <person name="Whitfield E.J."/>
            <person name="Bayraktaroglu L."/>
            <person name="Berman B.P."/>
            <person name="Bettencourt B.R."/>
            <person name="Celniker S.E."/>
            <person name="de Grey A.D.N.J."/>
            <person name="Drysdale R.A."/>
            <person name="Harris N.L."/>
            <person name="Richter J."/>
            <person name="Russo S."/>
            <person name="Schroeder A.J."/>
            <person name="Shu S.Q."/>
            <person name="Stapleton M."/>
            <person name="Yamada C."/>
            <person name="Ashburner M."/>
            <person name="Gelbart W.M."/>
            <person name="Rubin G.M."/>
            <person name="Lewis S.E."/>
        </authorList>
    </citation>
    <scope>GENOME REANNOTATION</scope>
    <source>
        <strain>Berkeley</strain>
    </source>
</reference>
<reference key="3">
    <citation type="journal article" date="2002" name="Genome Biol.">
        <title>A Drosophila full-length cDNA resource.</title>
        <authorList>
            <person name="Stapleton M."/>
            <person name="Carlson J.W."/>
            <person name="Brokstein P."/>
            <person name="Yu C."/>
            <person name="Champe M."/>
            <person name="George R.A."/>
            <person name="Guarin H."/>
            <person name="Kronmiller B."/>
            <person name="Pacleb J.M."/>
            <person name="Park S."/>
            <person name="Wan K.H."/>
            <person name="Rubin G.M."/>
            <person name="Celniker S.E."/>
        </authorList>
    </citation>
    <scope>NUCLEOTIDE SEQUENCE [LARGE SCALE MRNA]</scope>
    <source>
        <strain>Berkeley</strain>
        <tissue>Embryo</tissue>
    </source>
</reference>
<reference key="4">
    <citation type="journal article" date="2008" name="J. Proteome Res.">
        <title>Phosphoproteome analysis of Drosophila melanogaster embryos.</title>
        <authorList>
            <person name="Zhai B."/>
            <person name="Villen J."/>
            <person name="Beausoleil S.A."/>
            <person name="Mintseris J."/>
            <person name="Gygi S.P."/>
        </authorList>
    </citation>
    <scope>PHOSPHORYLATION [LARGE SCALE ANALYSIS] AT SER-102; SER-104; SER-164 AND SER-165</scope>
    <scope>IDENTIFICATION BY MASS SPECTROMETRY</scope>
    <source>
        <tissue>Embryo</tissue>
    </source>
</reference>
<reference key="5">
    <citation type="journal article" date="2009" name="Nat. Cell Biol.">
        <title>Live-imaging of single stem cells within their niche reveals that a U3snoRNP component segregates asymmetrically and is required for self-renewal in Drosophila.</title>
        <authorList>
            <person name="Fichelson P."/>
            <person name="Moch C."/>
            <person name="Ivanovitch K."/>
            <person name="Martin C."/>
            <person name="Sidor C.M."/>
            <person name="Lepesant J.A."/>
            <person name="Bellaiche Y."/>
            <person name="Huynh J.R."/>
        </authorList>
    </citation>
    <scope>FUNCTION</scope>
    <scope>SUBUNIT</scope>
    <scope>SUBCELLULAR LOCATION</scope>
    <scope>DISRUPTION PHENOTYPE</scope>
</reference>
<name>UTP18_DROME</name>
<gene>
    <name type="primary">wcd</name>
    <name type="synonym">l(2)k07824</name>
    <name type="ORF">CG7989</name>
</gene>
<evidence type="ECO:0000256" key="1">
    <source>
        <dbReference type="SAM" id="MobiDB-lite"/>
    </source>
</evidence>
<evidence type="ECO:0000269" key="2">
    <source>
    </source>
</evidence>
<evidence type="ECO:0000269" key="3">
    <source>
    </source>
</evidence>
<evidence type="ECO:0000305" key="4"/>
<keyword id="KW-0217">Developmental protein</keyword>
<keyword id="KW-0539">Nucleus</keyword>
<keyword id="KW-0597">Phosphoprotein</keyword>
<keyword id="KW-1185">Reference proteome</keyword>
<keyword id="KW-0677">Repeat</keyword>
<keyword id="KW-0698">rRNA processing</keyword>
<keyword id="KW-0853">WD repeat</keyword>
<dbReference type="EMBL" id="AE013599">
    <property type="protein sequence ID" value="AAF58006.1"/>
    <property type="molecule type" value="Genomic_DNA"/>
</dbReference>
<dbReference type="EMBL" id="AY119590">
    <property type="protein sequence ID" value="AAM50244.1"/>
    <property type="molecule type" value="mRNA"/>
</dbReference>
<dbReference type="RefSeq" id="NP_611121.1">
    <property type="nucleotide sequence ID" value="NM_137277.4"/>
</dbReference>
<dbReference type="SMR" id="Q9V7P1"/>
<dbReference type="BioGRID" id="62547">
    <property type="interactions" value="7"/>
</dbReference>
<dbReference type="DIP" id="DIP-23848N"/>
<dbReference type="FunCoup" id="Q9V7P1">
    <property type="interactions" value="2075"/>
</dbReference>
<dbReference type="IntAct" id="Q9V7P1">
    <property type="interactions" value="1"/>
</dbReference>
<dbReference type="STRING" id="7227.FBpp0086314"/>
<dbReference type="iPTMnet" id="Q9V7P1"/>
<dbReference type="PaxDb" id="7227-FBpp0086314"/>
<dbReference type="DNASU" id="36831"/>
<dbReference type="EnsemblMetazoa" id="FBtr0087170">
    <property type="protein sequence ID" value="FBpp0086314"/>
    <property type="gene ID" value="FBgn0262560"/>
</dbReference>
<dbReference type="GeneID" id="36831"/>
<dbReference type="KEGG" id="dme:Dmel_CG7989"/>
<dbReference type="AGR" id="FB:FBgn0262560"/>
<dbReference type="CTD" id="36831"/>
<dbReference type="FlyBase" id="FBgn0262560">
    <property type="gene designation" value="wcd"/>
</dbReference>
<dbReference type="VEuPathDB" id="VectorBase:FBgn0262560"/>
<dbReference type="eggNOG" id="KOG2055">
    <property type="taxonomic scope" value="Eukaryota"/>
</dbReference>
<dbReference type="GeneTree" id="ENSGT00940000165670"/>
<dbReference type="HOGENOM" id="CLU_011055_3_0_1"/>
<dbReference type="InParanoid" id="Q9V7P1"/>
<dbReference type="OMA" id="DLNRATY"/>
<dbReference type="OrthoDB" id="1935146at2759"/>
<dbReference type="PhylomeDB" id="Q9V7P1"/>
<dbReference type="Reactome" id="R-DME-6791226">
    <property type="pathway name" value="Major pathway of rRNA processing in the nucleolus and cytosol"/>
</dbReference>
<dbReference type="BioGRID-ORCS" id="36831">
    <property type="hits" value="0 hits in 1 CRISPR screen"/>
</dbReference>
<dbReference type="GenomeRNAi" id="36831"/>
<dbReference type="PRO" id="PR:Q9V7P1"/>
<dbReference type="Proteomes" id="UP000000803">
    <property type="component" value="Chromosome 2R"/>
</dbReference>
<dbReference type="Bgee" id="FBgn0262560">
    <property type="expression patterns" value="Expressed in eye disc (Drosophila) and 46 other cell types or tissues"/>
</dbReference>
<dbReference type="GO" id="GO:0042585">
    <property type="term" value="C:germinal vesicle"/>
    <property type="evidence" value="ECO:0000314"/>
    <property type="project" value="FlyBase"/>
</dbReference>
<dbReference type="GO" id="GO:0005730">
    <property type="term" value="C:nucleolus"/>
    <property type="evidence" value="ECO:0000314"/>
    <property type="project" value="FlyBase"/>
</dbReference>
<dbReference type="GO" id="GO:0005634">
    <property type="term" value="C:nucleus"/>
    <property type="evidence" value="ECO:0000314"/>
    <property type="project" value="FlyBase"/>
</dbReference>
<dbReference type="GO" id="GO:0034388">
    <property type="term" value="C:Pwp2p-containing subcomplex of 90S preribosome"/>
    <property type="evidence" value="ECO:0000318"/>
    <property type="project" value="GO_Central"/>
</dbReference>
<dbReference type="GO" id="GO:0030532">
    <property type="term" value="C:small nuclear ribonucleoprotein complex"/>
    <property type="evidence" value="ECO:0000353"/>
    <property type="project" value="FlyBase"/>
</dbReference>
<dbReference type="GO" id="GO:0032040">
    <property type="term" value="C:small-subunit processome"/>
    <property type="evidence" value="ECO:0000318"/>
    <property type="project" value="GO_Central"/>
</dbReference>
<dbReference type="GO" id="GO:0048132">
    <property type="term" value="P:female germ-line stem cell asymmetric division"/>
    <property type="evidence" value="ECO:0000315"/>
    <property type="project" value="FlyBase"/>
</dbReference>
<dbReference type="GO" id="GO:0007405">
    <property type="term" value="P:neuroblast proliferation"/>
    <property type="evidence" value="ECO:0000315"/>
    <property type="project" value="FlyBase"/>
</dbReference>
<dbReference type="GO" id="GO:0006364">
    <property type="term" value="P:rRNA processing"/>
    <property type="evidence" value="ECO:0000315"/>
    <property type="project" value="FlyBase"/>
</dbReference>
<dbReference type="Gene3D" id="2.130.10.10">
    <property type="entry name" value="YVTN repeat-like/Quinoprotein amine dehydrogenase"/>
    <property type="match status" value="1"/>
</dbReference>
<dbReference type="InterPro" id="IPR045161">
    <property type="entry name" value="Utp18"/>
</dbReference>
<dbReference type="InterPro" id="IPR015943">
    <property type="entry name" value="WD40/YVTN_repeat-like_dom_sf"/>
</dbReference>
<dbReference type="InterPro" id="IPR036322">
    <property type="entry name" value="WD40_repeat_dom_sf"/>
</dbReference>
<dbReference type="InterPro" id="IPR001680">
    <property type="entry name" value="WD40_rpt"/>
</dbReference>
<dbReference type="PANTHER" id="PTHR18359:SF0">
    <property type="entry name" value="U3 SMALL NUCLEOLAR RNA-ASSOCIATED PROTEIN 18 HOMOLOG"/>
    <property type="match status" value="1"/>
</dbReference>
<dbReference type="PANTHER" id="PTHR18359">
    <property type="entry name" value="WD-REPEAT PROTEIN-RELATED"/>
    <property type="match status" value="1"/>
</dbReference>
<dbReference type="Pfam" id="PF00400">
    <property type="entry name" value="WD40"/>
    <property type="match status" value="1"/>
</dbReference>
<dbReference type="SMART" id="SM00320">
    <property type="entry name" value="WD40"/>
    <property type="match status" value="4"/>
</dbReference>
<dbReference type="SUPFAM" id="SSF50978">
    <property type="entry name" value="WD40 repeat-like"/>
    <property type="match status" value="1"/>
</dbReference>
<protein>
    <recommendedName>
        <fullName>U3 small nucleolar RNA-associated protein 18 homolog</fullName>
    </recommendedName>
    <alternativeName>
        <fullName>Protein wicked</fullName>
    </alternativeName>
    <alternativeName>
        <fullName>WD repeat protein l(2)k07824</fullName>
    </alternativeName>
</protein>
<organism>
    <name type="scientific">Drosophila melanogaster</name>
    <name type="common">Fruit fly</name>
    <dbReference type="NCBI Taxonomy" id="7227"/>
    <lineage>
        <taxon>Eukaryota</taxon>
        <taxon>Metazoa</taxon>
        <taxon>Ecdysozoa</taxon>
        <taxon>Arthropoda</taxon>
        <taxon>Hexapoda</taxon>
        <taxon>Insecta</taxon>
        <taxon>Pterygota</taxon>
        <taxon>Neoptera</taxon>
        <taxon>Endopterygota</taxon>
        <taxon>Diptera</taxon>
        <taxon>Brachycera</taxon>
        <taxon>Muscomorpha</taxon>
        <taxon>Ephydroidea</taxon>
        <taxon>Drosophilidae</taxon>
        <taxon>Drosophila</taxon>
        <taxon>Sophophora</taxon>
    </lineage>
</organism>
<proteinExistence type="evidence at protein level"/>
<feature type="chain" id="PRO_0000051409" description="U3 small nucleolar RNA-associated protein 18 homolog">
    <location>
        <begin position="1"/>
        <end position="506"/>
    </location>
</feature>
<feature type="repeat" description="WD 1">
    <location>
        <begin position="203"/>
        <end position="242"/>
    </location>
</feature>
<feature type="repeat" description="WD 2">
    <location>
        <begin position="331"/>
        <end position="370"/>
    </location>
</feature>
<feature type="repeat" description="WD 3">
    <location>
        <begin position="372"/>
        <end position="413"/>
    </location>
</feature>
<feature type="repeat" description="WD 4">
    <location>
        <begin position="469"/>
        <end position="505"/>
    </location>
</feature>
<feature type="region of interest" description="Disordered" evidence="1">
    <location>
        <begin position="1"/>
        <end position="44"/>
    </location>
</feature>
<feature type="region of interest" description="Disordered" evidence="1">
    <location>
        <begin position="69"/>
        <end position="126"/>
    </location>
</feature>
<feature type="compositionally biased region" description="Acidic residues" evidence="1">
    <location>
        <begin position="1"/>
        <end position="11"/>
    </location>
</feature>
<feature type="compositionally biased region" description="Basic and acidic residues" evidence="1">
    <location>
        <begin position="24"/>
        <end position="37"/>
    </location>
</feature>
<feature type="modified residue" description="Phosphoserine" evidence="2">
    <location>
        <position position="102"/>
    </location>
</feature>
<feature type="modified residue" description="Phosphoserine" evidence="2">
    <location>
        <position position="104"/>
    </location>
</feature>
<feature type="modified residue" description="Phosphoserine" evidence="2">
    <location>
        <position position="164"/>
    </location>
</feature>
<feature type="modified residue" description="Phosphoserine" evidence="2">
    <location>
        <position position="165"/>
    </location>
</feature>
<accession>Q9V7P1</accession>
<sequence>MSSDESSDGLEELQSLKALYGQQEQEKPAKIKRERYIPKASQAKELNYVEVPMEKVLFGDRQRLLTNLAKSVGQKLPNDDEDEQEENPGQAKPGDKRKAAWSDSDDEDLQVGDVKKATKHTGPLNHLRKDKSYKEYLTARFQRTLNQPKWAEKKVKNEDDEDVSSDEELLRTVGFIDRKARNSDLPQKTLNFKRVKDLNRATYAEGNATSIQFHPTSTAALVAGMNGLATIYAVDGQKNERLHNMRFKKFPLACSRIAPCGTRAFFGSVKPFYYSYDLLEAKESKLKLPGAMEFMHRFEVSPCGKFIVTAGKFGAIHLLTAKTNELLHSFKQEGKVKGFTWSSDSKRILVCGSTSNVSVLNLRQNLIEHIFMDDGCIHGESIQLSPNQRLLATGSQEGVVNIYDYESIFASKAPQPEKRFMNLRTAITDLQFNHSSELLAMCSSEAPNAFKLAHFPSATVYSNFPAQNEKVGFVTSMAFSPHSSFLAFATKGKQVPLFRLKYFKGY</sequence>
<comment type="function">
    <text evidence="3">Component of a nucleolar small nuclear ribonucleoprotein particle (snoRNP) thought to participate in the processing and modification of pre-ribosomal RNA. Regulation of cell size by ribosome synthesis is an important parameter for stem cell maintenance and function.</text>
</comment>
<comment type="subunit">
    <text evidence="3">Component of U3 snoRNP complex.</text>
</comment>
<comment type="subcellular location">
    <subcellularLocation>
        <location evidence="3">Nucleus</location>
        <location evidence="3">Nucleolus</location>
    </subcellularLocation>
    <text>Asymmetric segregation of expression upon mitosis both in germline stem cells (GSCs) and dividing larval neural stem cells (NSCs) (at protein level).</text>
</comment>
<comment type="disruption phenotype">
    <text evidence="3">Induces premature differentiation of germline stem cells (GSCs).</text>
</comment>
<comment type="similarity">
    <text evidence="4">Belongs to the WD repeat UTP18 family.</text>
</comment>